<protein>
    <recommendedName>
        <fullName>Probable T-complex protein 1 subunit theta</fullName>
        <shortName>TCP-1-theta</shortName>
    </recommendedName>
    <alternativeName>
        <fullName>CCT-theta</fullName>
    </alternativeName>
</protein>
<organism>
    <name type="scientific">Schizosaccharomyces pombe (strain 972 / ATCC 24843)</name>
    <name type="common">Fission yeast</name>
    <dbReference type="NCBI Taxonomy" id="284812"/>
    <lineage>
        <taxon>Eukaryota</taxon>
        <taxon>Fungi</taxon>
        <taxon>Dikarya</taxon>
        <taxon>Ascomycota</taxon>
        <taxon>Taphrinomycotina</taxon>
        <taxon>Schizosaccharomycetes</taxon>
        <taxon>Schizosaccharomycetales</taxon>
        <taxon>Schizosaccharomycetaceae</taxon>
        <taxon>Schizosaccharomyces</taxon>
    </lineage>
</organism>
<feature type="chain" id="PRO_0000128377" description="Probable T-complex protein 1 subunit theta">
    <location>
        <begin position="1"/>
        <end position="546"/>
    </location>
</feature>
<feature type="region of interest" description="Disordered" evidence="2">
    <location>
        <begin position="527"/>
        <end position="546"/>
    </location>
</feature>
<feature type="sequence conflict" description="In Ref. 1; BAA13933." evidence="3" ref="1">
    <original>V</original>
    <variation>I</variation>
    <location>
        <position position="104"/>
    </location>
</feature>
<feature type="sequence conflict" description="In Ref. 1; BAA13933." evidence="3" ref="1">
    <original>TGELLA</original>
    <variation>SGALLL</variation>
    <location>
        <begin position="107"/>
        <end position="112"/>
    </location>
</feature>
<reference key="1">
    <citation type="journal article" date="1997" name="DNA Res.">
        <title>Identification of open reading frames in Schizosaccharomyces pombe cDNAs.</title>
        <authorList>
            <person name="Yoshioka S."/>
            <person name="Kato K."/>
            <person name="Nakai K."/>
            <person name="Okayama H."/>
            <person name="Nojima H."/>
        </authorList>
    </citation>
    <scope>NUCLEOTIDE SEQUENCE [LARGE SCALE MRNA]</scope>
    <source>
        <strain>PR745</strain>
    </source>
</reference>
<reference key="2">
    <citation type="journal article" date="2002" name="Nature">
        <title>The genome sequence of Schizosaccharomyces pombe.</title>
        <authorList>
            <person name="Wood V."/>
            <person name="Gwilliam R."/>
            <person name="Rajandream M.A."/>
            <person name="Lyne M.H."/>
            <person name="Lyne R."/>
            <person name="Stewart A."/>
            <person name="Sgouros J.G."/>
            <person name="Peat N."/>
            <person name="Hayles J."/>
            <person name="Baker S.G."/>
            <person name="Basham D."/>
            <person name="Bowman S."/>
            <person name="Brooks K."/>
            <person name="Brown D."/>
            <person name="Brown S."/>
            <person name="Chillingworth T."/>
            <person name="Churcher C.M."/>
            <person name="Collins M."/>
            <person name="Connor R."/>
            <person name="Cronin A."/>
            <person name="Davis P."/>
            <person name="Feltwell T."/>
            <person name="Fraser A."/>
            <person name="Gentles S."/>
            <person name="Goble A."/>
            <person name="Hamlin N."/>
            <person name="Harris D.E."/>
            <person name="Hidalgo J."/>
            <person name="Hodgson G."/>
            <person name="Holroyd S."/>
            <person name="Hornsby T."/>
            <person name="Howarth S."/>
            <person name="Huckle E.J."/>
            <person name="Hunt S."/>
            <person name="Jagels K."/>
            <person name="James K.D."/>
            <person name="Jones L."/>
            <person name="Jones M."/>
            <person name="Leather S."/>
            <person name="McDonald S."/>
            <person name="McLean J."/>
            <person name="Mooney P."/>
            <person name="Moule S."/>
            <person name="Mungall K.L."/>
            <person name="Murphy L.D."/>
            <person name="Niblett D."/>
            <person name="Odell C."/>
            <person name="Oliver K."/>
            <person name="O'Neil S."/>
            <person name="Pearson D."/>
            <person name="Quail M.A."/>
            <person name="Rabbinowitsch E."/>
            <person name="Rutherford K.M."/>
            <person name="Rutter S."/>
            <person name="Saunders D."/>
            <person name="Seeger K."/>
            <person name="Sharp S."/>
            <person name="Skelton J."/>
            <person name="Simmonds M.N."/>
            <person name="Squares R."/>
            <person name="Squares S."/>
            <person name="Stevens K."/>
            <person name="Taylor K."/>
            <person name="Taylor R.G."/>
            <person name="Tivey A."/>
            <person name="Walsh S.V."/>
            <person name="Warren T."/>
            <person name="Whitehead S."/>
            <person name="Woodward J.R."/>
            <person name="Volckaert G."/>
            <person name="Aert R."/>
            <person name="Robben J."/>
            <person name="Grymonprez B."/>
            <person name="Weltjens I."/>
            <person name="Vanstreels E."/>
            <person name="Rieger M."/>
            <person name="Schaefer M."/>
            <person name="Mueller-Auer S."/>
            <person name="Gabel C."/>
            <person name="Fuchs M."/>
            <person name="Duesterhoeft A."/>
            <person name="Fritzc C."/>
            <person name="Holzer E."/>
            <person name="Moestl D."/>
            <person name="Hilbert H."/>
            <person name="Borzym K."/>
            <person name="Langer I."/>
            <person name="Beck A."/>
            <person name="Lehrach H."/>
            <person name="Reinhardt R."/>
            <person name="Pohl T.M."/>
            <person name="Eger P."/>
            <person name="Zimmermann W."/>
            <person name="Wedler H."/>
            <person name="Wambutt R."/>
            <person name="Purnelle B."/>
            <person name="Goffeau A."/>
            <person name="Cadieu E."/>
            <person name="Dreano S."/>
            <person name="Gloux S."/>
            <person name="Lelaure V."/>
            <person name="Mottier S."/>
            <person name="Galibert F."/>
            <person name="Aves S.J."/>
            <person name="Xiang Z."/>
            <person name="Hunt C."/>
            <person name="Moore K."/>
            <person name="Hurst S.M."/>
            <person name="Lucas M."/>
            <person name="Rochet M."/>
            <person name="Gaillardin C."/>
            <person name="Tallada V.A."/>
            <person name="Garzon A."/>
            <person name="Thode G."/>
            <person name="Daga R.R."/>
            <person name="Cruzado L."/>
            <person name="Jimenez J."/>
            <person name="Sanchez M."/>
            <person name="del Rey F."/>
            <person name="Benito J."/>
            <person name="Dominguez A."/>
            <person name="Revuelta J.L."/>
            <person name="Moreno S."/>
            <person name="Armstrong J."/>
            <person name="Forsburg S.L."/>
            <person name="Cerutti L."/>
            <person name="Lowe T."/>
            <person name="McCombie W.R."/>
            <person name="Paulsen I."/>
            <person name="Potashkin J."/>
            <person name="Shpakovski G.V."/>
            <person name="Ussery D."/>
            <person name="Barrell B.G."/>
            <person name="Nurse P."/>
        </authorList>
    </citation>
    <scope>NUCLEOTIDE SEQUENCE [LARGE SCALE GENOMIC DNA]</scope>
    <source>
        <strain>972 / ATCC 24843</strain>
    </source>
</reference>
<sequence length="546" mass="59956">MALRVPKASGPQLFREGYRIMQGVEDAVIRNCNAIRELSEITRTSLGPNGKNKIVVNHLQQTFLTNDAATIIRELEVIHPAAKLVVDATQQQENELGDAANFVVVFTGELLAKAENMIRMGLTPLEIAKGYEMALSHTMEVLEEICADKIETVESEKELIKAIRTCISSKQYGNEDFLSDLVAKAILTVLPKDPSKFNVDNIRVVKIMGSSLYNSQVVKGMVFPREPEGTVTRSKEAKVAVFSCPLDISQTETKGTVLLHNAQEMLDFSKGEENLIESHIKEIYDAGVRVVVTSGNVNDLVLHYLNRFEILVIRVPSKFELRRLCRVVGATPLARMGVPMPEEMGSVDVVETIEIGGDRVTVFRQVEDITRTATIVLRGATKTYLDDLERAIDDGVNIVKALVKDNRLIFGAGASDMQLCIRLISVGEKTPGIYQHAIKQYGEAFEVVPRTISENAGLDPTDVISKLYAAHHKENGESIGVDVECENDGTLDAKEAGIFDVLLAKKSAIRLATETVLTVLNVDQVVMSKPAGGPKPPGPNPHWDDD</sequence>
<gene>
    <name type="primary">cct8</name>
    <name type="ORF">SPBC337.05c</name>
</gene>
<name>TCPQ_SCHPO</name>
<accession>P78921</accession>
<accession>O74816</accession>
<keyword id="KW-0067">ATP-binding</keyword>
<keyword id="KW-0143">Chaperone</keyword>
<keyword id="KW-0963">Cytoplasm</keyword>
<keyword id="KW-0547">Nucleotide-binding</keyword>
<keyword id="KW-1185">Reference proteome</keyword>
<proteinExistence type="evidence at transcript level"/>
<evidence type="ECO:0000250" key="1"/>
<evidence type="ECO:0000256" key="2">
    <source>
        <dbReference type="SAM" id="MobiDB-lite"/>
    </source>
</evidence>
<evidence type="ECO:0000305" key="3"/>
<dbReference type="EMBL" id="D89272">
    <property type="protein sequence ID" value="BAA13933.1"/>
    <property type="status" value="ALT_INIT"/>
    <property type="molecule type" value="mRNA"/>
</dbReference>
<dbReference type="EMBL" id="CU329671">
    <property type="protein sequence ID" value="CAA21275.1"/>
    <property type="molecule type" value="Genomic_DNA"/>
</dbReference>
<dbReference type="PIR" id="T40258">
    <property type="entry name" value="T40258"/>
</dbReference>
<dbReference type="PIR" id="T43202">
    <property type="entry name" value="T43202"/>
</dbReference>
<dbReference type="RefSeq" id="NP_595406.1">
    <property type="nucleotide sequence ID" value="NM_001021313.2"/>
</dbReference>
<dbReference type="SMR" id="P78921"/>
<dbReference type="BioGRID" id="276835">
    <property type="interactions" value="8"/>
</dbReference>
<dbReference type="FunCoup" id="P78921">
    <property type="interactions" value="783"/>
</dbReference>
<dbReference type="IntAct" id="P78921">
    <property type="interactions" value="1"/>
</dbReference>
<dbReference type="STRING" id="284812.P78921"/>
<dbReference type="iPTMnet" id="P78921"/>
<dbReference type="PaxDb" id="4896-SPBC337.05c.1"/>
<dbReference type="EnsemblFungi" id="SPBC337.05c.1">
    <property type="protein sequence ID" value="SPBC337.05c.1:pep"/>
    <property type="gene ID" value="SPBC337.05c"/>
</dbReference>
<dbReference type="GeneID" id="2540305"/>
<dbReference type="KEGG" id="spo:2540305"/>
<dbReference type="PomBase" id="SPBC337.05c">
    <property type="gene designation" value="cct8"/>
</dbReference>
<dbReference type="VEuPathDB" id="FungiDB:SPBC337.05c"/>
<dbReference type="eggNOG" id="KOG0362">
    <property type="taxonomic scope" value="Eukaryota"/>
</dbReference>
<dbReference type="HOGENOM" id="CLU_008891_4_2_1"/>
<dbReference type="InParanoid" id="P78921"/>
<dbReference type="OMA" id="WGLKYAV"/>
<dbReference type="PhylomeDB" id="P78921"/>
<dbReference type="Reactome" id="R-SPO-390471">
    <property type="pathway name" value="Association of TriC/CCT with target proteins during biosynthesis"/>
</dbReference>
<dbReference type="Reactome" id="R-SPO-6798695">
    <property type="pathway name" value="Neutrophil degranulation"/>
</dbReference>
<dbReference type="Reactome" id="R-SPO-6814122">
    <property type="pathway name" value="Cooperation of PDCL (PhLP1) and TRiC/CCT in G-protein beta folding"/>
</dbReference>
<dbReference type="PRO" id="PR:P78921"/>
<dbReference type="Proteomes" id="UP000002485">
    <property type="component" value="Chromosome II"/>
</dbReference>
<dbReference type="GO" id="GO:0005832">
    <property type="term" value="C:chaperonin-containing T-complex"/>
    <property type="evidence" value="ECO:0000314"/>
    <property type="project" value="PomBase"/>
</dbReference>
<dbReference type="GO" id="GO:0005856">
    <property type="term" value="C:cytoskeleton"/>
    <property type="evidence" value="ECO:0000266"/>
    <property type="project" value="PomBase"/>
</dbReference>
<dbReference type="GO" id="GO:0005829">
    <property type="term" value="C:cytosol"/>
    <property type="evidence" value="ECO:0007005"/>
    <property type="project" value="PomBase"/>
</dbReference>
<dbReference type="GO" id="GO:0005524">
    <property type="term" value="F:ATP binding"/>
    <property type="evidence" value="ECO:0007669"/>
    <property type="project" value="UniProtKB-KW"/>
</dbReference>
<dbReference type="GO" id="GO:0016887">
    <property type="term" value="F:ATP hydrolysis activity"/>
    <property type="evidence" value="ECO:0007669"/>
    <property type="project" value="InterPro"/>
</dbReference>
<dbReference type="GO" id="GO:0140662">
    <property type="term" value="F:ATP-dependent protein folding chaperone"/>
    <property type="evidence" value="ECO:0007669"/>
    <property type="project" value="InterPro"/>
</dbReference>
<dbReference type="GO" id="GO:0051082">
    <property type="term" value="F:unfolded protein binding"/>
    <property type="evidence" value="ECO:0000318"/>
    <property type="project" value="GO_Central"/>
</dbReference>
<dbReference type="GO" id="GO:0006457">
    <property type="term" value="P:protein folding"/>
    <property type="evidence" value="ECO:0000318"/>
    <property type="project" value="GO_Central"/>
</dbReference>
<dbReference type="CDD" id="cd03341">
    <property type="entry name" value="TCP1_theta"/>
    <property type="match status" value="1"/>
</dbReference>
<dbReference type="FunFam" id="3.50.7.10:FF:000008">
    <property type="entry name" value="T-complex protein 1 subunit theta"/>
    <property type="match status" value="1"/>
</dbReference>
<dbReference type="Gene3D" id="3.50.7.10">
    <property type="entry name" value="GroEL"/>
    <property type="match status" value="1"/>
</dbReference>
<dbReference type="Gene3D" id="1.10.560.10">
    <property type="entry name" value="GroEL-like equatorial domain"/>
    <property type="match status" value="1"/>
</dbReference>
<dbReference type="Gene3D" id="3.30.260.10">
    <property type="entry name" value="TCP-1-like chaperonin intermediate domain"/>
    <property type="match status" value="1"/>
</dbReference>
<dbReference type="InterPro" id="IPR012721">
    <property type="entry name" value="Chap_CCT_theta"/>
</dbReference>
<dbReference type="InterPro" id="IPR017998">
    <property type="entry name" value="Chaperone_TCP-1"/>
</dbReference>
<dbReference type="InterPro" id="IPR002194">
    <property type="entry name" value="Chaperonin_TCP-1_CS"/>
</dbReference>
<dbReference type="InterPro" id="IPR002423">
    <property type="entry name" value="Cpn60/GroEL/TCP-1"/>
</dbReference>
<dbReference type="InterPro" id="IPR027409">
    <property type="entry name" value="GroEL-like_apical_dom_sf"/>
</dbReference>
<dbReference type="InterPro" id="IPR027413">
    <property type="entry name" value="GROEL-like_equatorial_sf"/>
</dbReference>
<dbReference type="InterPro" id="IPR027410">
    <property type="entry name" value="TCP-1-like_intermed_sf"/>
</dbReference>
<dbReference type="NCBIfam" id="TIGR02346">
    <property type="entry name" value="chap_CCT_theta"/>
    <property type="match status" value="1"/>
</dbReference>
<dbReference type="PANTHER" id="PTHR11353">
    <property type="entry name" value="CHAPERONIN"/>
    <property type="match status" value="1"/>
</dbReference>
<dbReference type="Pfam" id="PF00118">
    <property type="entry name" value="Cpn60_TCP1"/>
    <property type="match status" value="1"/>
</dbReference>
<dbReference type="PRINTS" id="PR00304">
    <property type="entry name" value="TCOMPLEXTCP1"/>
</dbReference>
<dbReference type="SUPFAM" id="SSF52029">
    <property type="entry name" value="GroEL apical domain-like"/>
    <property type="match status" value="1"/>
</dbReference>
<dbReference type="SUPFAM" id="SSF48592">
    <property type="entry name" value="GroEL equatorial domain-like"/>
    <property type="match status" value="1"/>
</dbReference>
<dbReference type="SUPFAM" id="SSF54849">
    <property type="entry name" value="GroEL-intermediate domain like"/>
    <property type="match status" value="1"/>
</dbReference>
<dbReference type="PROSITE" id="PS00750">
    <property type="entry name" value="TCP1_1"/>
    <property type="match status" value="1"/>
</dbReference>
<dbReference type="PROSITE" id="PS00751">
    <property type="entry name" value="TCP1_2"/>
    <property type="match status" value="1"/>
</dbReference>
<comment type="function">
    <text evidence="1">Molecular chaperone; assists the folding of proteins upon ATP hydrolysis. Known to play a role, in vitro, in the folding of actin and tubulin (By similarity).</text>
</comment>
<comment type="subunit">
    <text evidence="1">Heterooligomeric complex of about 850 to 900 kDa that forms two stacked rings, 12 to 16 nm in diameter.</text>
</comment>
<comment type="subcellular location">
    <subcellularLocation>
        <location evidence="1">Cytoplasm</location>
    </subcellularLocation>
</comment>
<comment type="similarity">
    <text evidence="3">Belongs to the TCP-1 chaperonin family.</text>
</comment>
<comment type="sequence caution" evidence="3">
    <conflict type="erroneous initiation">
        <sequence resource="EMBL-CDS" id="BAA13933"/>
    </conflict>
</comment>